<dbReference type="EC" id="1.5.1.5" evidence="1"/>
<dbReference type="EC" id="3.5.4.9" evidence="1"/>
<dbReference type="EMBL" id="CU928161">
    <property type="protein sequence ID" value="CAR01874.1"/>
    <property type="molecule type" value="Genomic_DNA"/>
</dbReference>
<dbReference type="RefSeq" id="WP_000729155.1">
    <property type="nucleotide sequence ID" value="NC_011742.1"/>
</dbReference>
<dbReference type="SMR" id="B7ME52"/>
<dbReference type="GeneID" id="93776949"/>
<dbReference type="KEGG" id="ecz:ECS88_0529"/>
<dbReference type="HOGENOM" id="CLU_034045_2_1_6"/>
<dbReference type="UniPathway" id="UPA00193"/>
<dbReference type="Proteomes" id="UP000000747">
    <property type="component" value="Chromosome"/>
</dbReference>
<dbReference type="GO" id="GO:0005829">
    <property type="term" value="C:cytosol"/>
    <property type="evidence" value="ECO:0007669"/>
    <property type="project" value="TreeGrafter"/>
</dbReference>
<dbReference type="GO" id="GO:0004477">
    <property type="term" value="F:methenyltetrahydrofolate cyclohydrolase activity"/>
    <property type="evidence" value="ECO:0007669"/>
    <property type="project" value="UniProtKB-UniRule"/>
</dbReference>
<dbReference type="GO" id="GO:0004488">
    <property type="term" value="F:methylenetetrahydrofolate dehydrogenase (NADP+) activity"/>
    <property type="evidence" value="ECO:0007669"/>
    <property type="project" value="UniProtKB-UniRule"/>
</dbReference>
<dbReference type="GO" id="GO:0000105">
    <property type="term" value="P:L-histidine biosynthetic process"/>
    <property type="evidence" value="ECO:0007669"/>
    <property type="project" value="UniProtKB-KW"/>
</dbReference>
<dbReference type="GO" id="GO:0009086">
    <property type="term" value="P:methionine biosynthetic process"/>
    <property type="evidence" value="ECO:0007669"/>
    <property type="project" value="UniProtKB-KW"/>
</dbReference>
<dbReference type="GO" id="GO:0006164">
    <property type="term" value="P:purine nucleotide biosynthetic process"/>
    <property type="evidence" value="ECO:0007669"/>
    <property type="project" value="UniProtKB-KW"/>
</dbReference>
<dbReference type="GO" id="GO:0035999">
    <property type="term" value="P:tetrahydrofolate interconversion"/>
    <property type="evidence" value="ECO:0007669"/>
    <property type="project" value="UniProtKB-UniRule"/>
</dbReference>
<dbReference type="CDD" id="cd01080">
    <property type="entry name" value="NAD_bind_m-THF_DH_Cyclohyd"/>
    <property type="match status" value="1"/>
</dbReference>
<dbReference type="FunFam" id="3.40.50.10860:FF:000001">
    <property type="entry name" value="Bifunctional protein FolD"/>
    <property type="match status" value="1"/>
</dbReference>
<dbReference type="FunFam" id="3.40.50.720:FF:000006">
    <property type="entry name" value="Bifunctional protein FolD"/>
    <property type="match status" value="1"/>
</dbReference>
<dbReference type="Gene3D" id="3.40.50.10860">
    <property type="entry name" value="Leucine Dehydrogenase, chain A, domain 1"/>
    <property type="match status" value="1"/>
</dbReference>
<dbReference type="Gene3D" id="3.40.50.720">
    <property type="entry name" value="NAD(P)-binding Rossmann-like Domain"/>
    <property type="match status" value="1"/>
</dbReference>
<dbReference type="HAMAP" id="MF_01576">
    <property type="entry name" value="THF_DHG_CYH"/>
    <property type="match status" value="1"/>
</dbReference>
<dbReference type="InterPro" id="IPR046346">
    <property type="entry name" value="Aminoacid_DH-like_N_sf"/>
</dbReference>
<dbReference type="InterPro" id="IPR036291">
    <property type="entry name" value="NAD(P)-bd_dom_sf"/>
</dbReference>
<dbReference type="InterPro" id="IPR000672">
    <property type="entry name" value="THF_DH/CycHdrlase"/>
</dbReference>
<dbReference type="InterPro" id="IPR020630">
    <property type="entry name" value="THF_DH/CycHdrlase_cat_dom"/>
</dbReference>
<dbReference type="InterPro" id="IPR020867">
    <property type="entry name" value="THF_DH/CycHdrlase_CS"/>
</dbReference>
<dbReference type="InterPro" id="IPR020631">
    <property type="entry name" value="THF_DH/CycHdrlase_NAD-bd_dom"/>
</dbReference>
<dbReference type="NCBIfam" id="NF008058">
    <property type="entry name" value="PRK10792.1"/>
    <property type="match status" value="1"/>
</dbReference>
<dbReference type="NCBIfam" id="NF010783">
    <property type="entry name" value="PRK14186.1"/>
    <property type="match status" value="1"/>
</dbReference>
<dbReference type="PANTHER" id="PTHR48099:SF5">
    <property type="entry name" value="C-1-TETRAHYDROFOLATE SYNTHASE, CYTOPLASMIC"/>
    <property type="match status" value="1"/>
</dbReference>
<dbReference type="PANTHER" id="PTHR48099">
    <property type="entry name" value="C-1-TETRAHYDROFOLATE SYNTHASE, CYTOPLASMIC-RELATED"/>
    <property type="match status" value="1"/>
</dbReference>
<dbReference type="Pfam" id="PF00763">
    <property type="entry name" value="THF_DHG_CYH"/>
    <property type="match status" value="1"/>
</dbReference>
<dbReference type="Pfam" id="PF02882">
    <property type="entry name" value="THF_DHG_CYH_C"/>
    <property type="match status" value="1"/>
</dbReference>
<dbReference type="PRINTS" id="PR00085">
    <property type="entry name" value="THFDHDRGNASE"/>
</dbReference>
<dbReference type="SUPFAM" id="SSF53223">
    <property type="entry name" value="Aminoacid dehydrogenase-like, N-terminal domain"/>
    <property type="match status" value="1"/>
</dbReference>
<dbReference type="SUPFAM" id="SSF51735">
    <property type="entry name" value="NAD(P)-binding Rossmann-fold domains"/>
    <property type="match status" value="1"/>
</dbReference>
<dbReference type="PROSITE" id="PS00766">
    <property type="entry name" value="THF_DHG_CYH_1"/>
    <property type="match status" value="1"/>
</dbReference>
<dbReference type="PROSITE" id="PS00767">
    <property type="entry name" value="THF_DHG_CYH_2"/>
    <property type="match status" value="1"/>
</dbReference>
<evidence type="ECO:0000255" key="1">
    <source>
        <dbReference type="HAMAP-Rule" id="MF_01576"/>
    </source>
</evidence>
<protein>
    <recommendedName>
        <fullName evidence="1">Bifunctional protein FolD</fullName>
    </recommendedName>
    <domain>
        <recommendedName>
            <fullName evidence="1">Methylenetetrahydrofolate dehydrogenase</fullName>
            <ecNumber evidence="1">1.5.1.5</ecNumber>
        </recommendedName>
    </domain>
    <domain>
        <recommendedName>
            <fullName evidence="1">Methenyltetrahydrofolate cyclohydrolase</fullName>
            <ecNumber evidence="1">3.5.4.9</ecNumber>
        </recommendedName>
    </domain>
</protein>
<accession>B7ME52</accession>
<feature type="chain" id="PRO_1000196776" description="Bifunctional protein FolD">
    <location>
        <begin position="1"/>
        <end position="288"/>
    </location>
</feature>
<feature type="binding site" evidence="1">
    <location>
        <begin position="166"/>
        <end position="168"/>
    </location>
    <ligand>
        <name>NADP(+)</name>
        <dbReference type="ChEBI" id="CHEBI:58349"/>
    </ligand>
</feature>
<feature type="binding site" evidence="1">
    <location>
        <position position="232"/>
    </location>
    <ligand>
        <name>NADP(+)</name>
        <dbReference type="ChEBI" id="CHEBI:58349"/>
    </ligand>
</feature>
<name>FOLD_ECO45</name>
<sequence>MAAKIIDGKTIAQQVRSEVAQKVQARIAAGLRAPGLAVVLVGSNPASQIYVASKRKACEEVGFVSRSYDLPETTSEAELLELIDALNADNTIDGILVQLPLPAGIDNVKVLERIHPDKDVDGFHPYNVGRLCQRAPRLRPCTPRGIVTLLERYNIDTFGLNAVVIGASNIVGRPMSMELLLAGCTTTVTHRFTKNLRHHVENADLLIVAVGKPGFIPGDWIKEGAIVIDVGINRLENGKVVGDVVFEDAAKRASYITPVPGGVGPMTVATLIENTLQACVEYHDPQGE</sequence>
<comment type="function">
    <text evidence="1">Catalyzes the oxidation of 5,10-methylenetetrahydrofolate to 5,10-methenyltetrahydrofolate and then the hydrolysis of 5,10-methenyltetrahydrofolate to 10-formyltetrahydrofolate.</text>
</comment>
<comment type="catalytic activity">
    <reaction evidence="1">
        <text>(6R)-5,10-methylene-5,6,7,8-tetrahydrofolate + NADP(+) = (6R)-5,10-methenyltetrahydrofolate + NADPH</text>
        <dbReference type="Rhea" id="RHEA:22812"/>
        <dbReference type="ChEBI" id="CHEBI:15636"/>
        <dbReference type="ChEBI" id="CHEBI:57455"/>
        <dbReference type="ChEBI" id="CHEBI:57783"/>
        <dbReference type="ChEBI" id="CHEBI:58349"/>
        <dbReference type="EC" id="1.5.1.5"/>
    </reaction>
</comment>
<comment type="catalytic activity">
    <reaction evidence="1">
        <text>(6R)-5,10-methenyltetrahydrofolate + H2O = (6R)-10-formyltetrahydrofolate + H(+)</text>
        <dbReference type="Rhea" id="RHEA:23700"/>
        <dbReference type="ChEBI" id="CHEBI:15377"/>
        <dbReference type="ChEBI" id="CHEBI:15378"/>
        <dbReference type="ChEBI" id="CHEBI:57455"/>
        <dbReference type="ChEBI" id="CHEBI:195366"/>
        <dbReference type="EC" id="3.5.4.9"/>
    </reaction>
</comment>
<comment type="pathway">
    <text evidence="1">One-carbon metabolism; tetrahydrofolate interconversion.</text>
</comment>
<comment type="subunit">
    <text evidence="1">Homodimer.</text>
</comment>
<comment type="similarity">
    <text evidence="1">Belongs to the tetrahydrofolate dehydrogenase/cyclohydrolase family.</text>
</comment>
<keyword id="KW-0028">Amino-acid biosynthesis</keyword>
<keyword id="KW-0368">Histidine biosynthesis</keyword>
<keyword id="KW-0378">Hydrolase</keyword>
<keyword id="KW-0486">Methionine biosynthesis</keyword>
<keyword id="KW-0511">Multifunctional enzyme</keyword>
<keyword id="KW-0521">NADP</keyword>
<keyword id="KW-0554">One-carbon metabolism</keyword>
<keyword id="KW-0560">Oxidoreductase</keyword>
<keyword id="KW-0658">Purine biosynthesis</keyword>
<keyword id="KW-1185">Reference proteome</keyword>
<organism>
    <name type="scientific">Escherichia coli O45:K1 (strain S88 / ExPEC)</name>
    <dbReference type="NCBI Taxonomy" id="585035"/>
    <lineage>
        <taxon>Bacteria</taxon>
        <taxon>Pseudomonadati</taxon>
        <taxon>Pseudomonadota</taxon>
        <taxon>Gammaproteobacteria</taxon>
        <taxon>Enterobacterales</taxon>
        <taxon>Enterobacteriaceae</taxon>
        <taxon>Escherichia</taxon>
    </lineage>
</organism>
<proteinExistence type="inferred from homology"/>
<reference key="1">
    <citation type="journal article" date="2009" name="PLoS Genet.">
        <title>Organised genome dynamics in the Escherichia coli species results in highly diverse adaptive paths.</title>
        <authorList>
            <person name="Touchon M."/>
            <person name="Hoede C."/>
            <person name="Tenaillon O."/>
            <person name="Barbe V."/>
            <person name="Baeriswyl S."/>
            <person name="Bidet P."/>
            <person name="Bingen E."/>
            <person name="Bonacorsi S."/>
            <person name="Bouchier C."/>
            <person name="Bouvet O."/>
            <person name="Calteau A."/>
            <person name="Chiapello H."/>
            <person name="Clermont O."/>
            <person name="Cruveiller S."/>
            <person name="Danchin A."/>
            <person name="Diard M."/>
            <person name="Dossat C."/>
            <person name="Karoui M.E."/>
            <person name="Frapy E."/>
            <person name="Garry L."/>
            <person name="Ghigo J.M."/>
            <person name="Gilles A.M."/>
            <person name="Johnson J."/>
            <person name="Le Bouguenec C."/>
            <person name="Lescat M."/>
            <person name="Mangenot S."/>
            <person name="Martinez-Jehanne V."/>
            <person name="Matic I."/>
            <person name="Nassif X."/>
            <person name="Oztas S."/>
            <person name="Petit M.A."/>
            <person name="Pichon C."/>
            <person name="Rouy Z."/>
            <person name="Ruf C.S."/>
            <person name="Schneider D."/>
            <person name="Tourret J."/>
            <person name="Vacherie B."/>
            <person name="Vallenet D."/>
            <person name="Medigue C."/>
            <person name="Rocha E.P.C."/>
            <person name="Denamur E."/>
        </authorList>
    </citation>
    <scope>NUCLEOTIDE SEQUENCE [LARGE SCALE GENOMIC DNA]</scope>
    <source>
        <strain>S88 / ExPEC</strain>
    </source>
</reference>
<gene>
    <name evidence="1" type="primary">folD</name>
    <name type="ordered locus">ECS88_0529</name>
</gene>